<sequence>MTDRTCLSIVLAAGEGTRMKSNLPKVLHRVAGLPLVCHVVNAVRGTGKSDVALVVGRGAEDVRSAVEKIAGPVSAFEQKERLGTAHAVLAAHEAIARGYDDLLIVFGDTPLIEAQSLLAARERLAQGADLVVIGFRPASPHGYGRLIEEGGQLVAIIEEKEATDEQKKIGFCNGGLMALRGQHALALLDAVGNDNAKGEYYLTDIVAIAHGKGLNVTAIEVPVDNVIGINNRAELAEAETIWQNRKRRELMLSGVTLIAPETVFFSYDTVIEPDVVIEPNVFFGPSVHVASGALIHSFSHLEGAQVGEKAEIGPFARLRPGADLAEKSKVGNFCEVKNAKVGKGAKINHLAYIGDAVIGASSNIGAGTITCNYDGYNKFKTIIGDNAFIGSNSSLVAPVEIGDNAYIASGSVITADVPADALALGRARQETKEGRAKILREKYAAIKAAKSVSK</sequence>
<gene>
    <name evidence="1" type="primary">glmU</name>
    <name type="ordered locus">BAB2_0657</name>
</gene>
<reference key="1">
    <citation type="journal article" date="2005" name="Infect. Immun.">
        <title>Whole-genome analyses of speciation events in pathogenic Brucellae.</title>
        <authorList>
            <person name="Chain P.S."/>
            <person name="Comerci D.J."/>
            <person name="Tolmasky M.E."/>
            <person name="Larimer F.W."/>
            <person name="Malfatti S.A."/>
            <person name="Vergez L.M."/>
            <person name="Aguero F."/>
            <person name="Land M.L."/>
            <person name="Ugalde R.A."/>
            <person name="Garcia E."/>
        </authorList>
    </citation>
    <scope>NUCLEOTIDE SEQUENCE [LARGE SCALE GENOMIC DNA]</scope>
    <source>
        <strain>2308</strain>
    </source>
</reference>
<protein>
    <recommendedName>
        <fullName evidence="1">Bifunctional protein GlmU</fullName>
    </recommendedName>
    <domain>
        <recommendedName>
            <fullName evidence="1">UDP-N-acetylglucosamine pyrophosphorylase</fullName>
            <ecNumber evidence="1">2.7.7.23</ecNumber>
        </recommendedName>
        <alternativeName>
            <fullName evidence="1">N-acetylglucosamine-1-phosphate uridyltransferase</fullName>
        </alternativeName>
    </domain>
    <domain>
        <recommendedName>
            <fullName evidence="1">Glucosamine-1-phosphate N-acetyltransferase</fullName>
            <ecNumber evidence="1">2.3.1.157</ecNumber>
        </recommendedName>
    </domain>
</protein>
<keyword id="KW-0012">Acyltransferase</keyword>
<keyword id="KW-0133">Cell shape</keyword>
<keyword id="KW-0961">Cell wall biogenesis/degradation</keyword>
<keyword id="KW-0963">Cytoplasm</keyword>
<keyword id="KW-0460">Magnesium</keyword>
<keyword id="KW-0479">Metal-binding</keyword>
<keyword id="KW-0511">Multifunctional enzyme</keyword>
<keyword id="KW-0548">Nucleotidyltransferase</keyword>
<keyword id="KW-0573">Peptidoglycan synthesis</keyword>
<keyword id="KW-1185">Reference proteome</keyword>
<keyword id="KW-0677">Repeat</keyword>
<keyword id="KW-0808">Transferase</keyword>
<name>GLMU_BRUA2</name>
<organism>
    <name type="scientific">Brucella abortus (strain 2308)</name>
    <dbReference type="NCBI Taxonomy" id="359391"/>
    <lineage>
        <taxon>Bacteria</taxon>
        <taxon>Pseudomonadati</taxon>
        <taxon>Pseudomonadota</taxon>
        <taxon>Alphaproteobacteria</taxon>
        <taxon>Hyphomicrobiales</taxon>
        <taxon>Brucellaceae</taxon>
        <taxon>Brucella/Ochrobactrum group</taxon>
        <taxon>Brucella</taxon>
    </lineage>
</organism>
<dbReference type="EC" id="2.7.7.23" evidence="1"/>
<dbReference type="EC" id="2.3.1.157" evidence="1"/>
<dbReference type="EMBL" id="AM040265">
    <property type="protein sequence ID" value="CAJ12823.1"/>
    <property type="molecule type" value="Genomic_DNA"/>
</dbReference>
<dbReference type="RefSeq" id="WP_002966051.1">
    <property type="nucleotide sequence ID" value="NZ_KN046823.1"/>
</dbReference>
<dbReference type="SMR" id="Q2YKK2"/>
<dbReference type="STRING" id="359391.BAB2_0657"/>
<dbReference type="GeneID" id="93015456"/>
<dbReference type="KEGG" id="bmf:BAB2_0657"/>
<dbReference type="PATRIC" id="fig|359391.11.peg.2840"/>
<dbReference type="HOGENOM" id="CLU_029499_15_2_5"/>
<dbReference type="PhylomeDB" id="Q2YKK2"/>
<dbReference type="UniPathway" id="UPA00113">
    <property type="reaction ID" value="UER00532"/>
</dbReference>
<dbReference type="UniPathway" id="UPA00113">
    <property type="reaction ID" value="UER00533"/>
</dbReference>
<dbReference type="UniPathway" id="UPA00973"/>
<dbReference type="Proteomes" id="UP000002719">
    <property type="component" value="Chromosome II"/>
</dbReference>
<dbReference type="GO" id="GO:0005737">
    <property type="term" value="C:cytoplasm"/>
    <property type="evidence" value="ECO:0007669"/>
    <property type="project" value="UniProtKB-SubCell"/>
</dbReference>
<dbReference type="GO" id="GO:0016020">
    <property type="term" value="C:membrane"/>
    <property type="evidence" value="ECO:0007669"/>
    <property type="project" value="GOC"/>
</dbReference>
<dbReference type="GO" id="GO:0019134">
    <property type="term" value="F:glucosamine-1-phosphate N-acetyltransferase activity"/>
    <property type="evidence" value="ECO:0007669"/>
    <property type="project" value="UniProtKB-UniRule"/>
</dbReference>
<dbReference type="GO" id="GO:0000287">
    <property type="term" value="F:magnesium ion binding"/>
    <property type="evidence" value="ECO:0007669"/>
    <property type="project" value="UniProtKB-UniRule"/>
</dbReference>
<dbReference type="GO" id="GO:0003977">
    <property type="term" value="F:UDP-N-acetylglucosamine diphosphorylase activity"/>
    <property type="evidence" value="ECO:0007669"/>
    <property type="project" value="UniProtKB-UniRule"/>
</dbReference>
<dbReference type="GO" id="GO:0000902">
    <property type="term" value="P:cell morphogenesis"/>
    <property type="evidence" value="ECO:0007669"/>
    <property type="project" value="UniProtKB-UniRule"/>
</dbReference>
<dbReference type="GO" id="GO:0071555">
    <property type="term" value="P:cell wall organization"/>
    <property type="evidence" value="ECO:0007669"/>
    <property type="project" value="UniProtKB-KW"/>
</dbReference>
<dbReference type="GO" id="GO:0009245">
    <property type="term" value="P:lipid A biosynthetic process"/>
    <property type="evidence" value="ECO:0007669"/>
    <property type="project" value="UniProtKB-UniRule"/>
</dbReference>
<dbReference type="GO" id="GO:0009252">
    <property type="term" value="P:peptidoglycan biosynthetic process"/>
    <property type="evidence" value="ECO:0007669"/>
    <property type="project" value="UniProtKB-UniRule"/>
</dbReference>
<dbReference type="GO" id="GO:0008360">
    <property type="term" value="P:regulation of cell shape"/>
    <property type="evidence" value="ECO:0007669"/>
    <property type="project" value="UniProtKB-KW"/>
</dbReference>
<dbReference type="GO" id="GO:0006048">
    <property type="term" value="P:UDP-N-acetylglucosamine biosynthetic process"/>
    <property type="evidence" value="ECO:0007669"/>
    <property type="project" value="UniProtKB-UniPathway"/>
</dbReference>
<dbReference type="CDD" id="cd02540">
    <property type="entry name" value="GT2_GlmU_N_bac"/>
    <property type="match status" value="1"/>
</dbReference>
<dbReference type="CDD" id="cd03353">
    <property type="entry name" value="LbH_GlmU_C"/>
    <property type="match status" value="1"/>
</dbReference>
<dbReference type="Gene3D" id="2.160.10.10">
    <property type="entry name" value="Hexapeptide repeat proteins"/>
    <property type="match status" value="1"/>
</dbReference>
<dbReference type="Gene3D" id="3.90.550.10">
    <property type="entry name" value="Spore Coat Polysaccharide Biosynthesis Protein SpsA, Chain A"/>
    <property type="match status" value="1"/>
</dbReference>
<dbReference type="HAMAP" id="MF_01631">
    <property type="entry name" value="GlmU"/>
    <property type="match status" value="1"/>
</dbReference>
<dbReference type="InterPro" id="IPR005882">
    <property type="entry name" value="Bifunctional_GlmU"/>
</dbReference>
<dbReference type="InterPro" id="IPR050065">
    <property type="entry name" value="GlmU-like"/>
</dbReference>
<dbReference type="InterPro" id="IPR038009">
    <property type="entry name" value="GlmU_C_LbH"/>
</dbReference>
<dbReference type="InterPro" id="IPR001451">
    <property type="entry name" value="Hexapep"/>
</dbReference>
<dbReference type="InterPro" id="IPR018357">
    <property type="entry name" value="Hexapep_transf_CS"/>
</dbReference>
<dbReference type="InterPro" id="IPR025877">
    <property type="entry name" value="MobA-like_NTP_Trfase"/>
</dbReference>
<dbReference type="InterPro" id="IPR029044">
    <property type="entry name" value="Nucleotide-diphossugar_trans"/>
</dbReference>
<dbReference type="InterPro" id="IPR011004">
    <property type="entry name" value="Trimer_LpxA-like_sf"/>
</dbReference>
<dbReference type="NCBIfam" id="TIGR01173">
    <property type="entry name" value="glmU"/>
    <property type="match status" value="1"/>
</dbReference>
<dbReference type="NCBIfam" id="NF010933">
    <property type="entry name" value="PRK14353.1"/>
    <property type="match status" value="1"/>
</dbReference>
<dbReference type="PANTHER" id="PTHR43584:SF3">
    <property type="entry name" value="BIFUNCTIONAL PROTEIN GLMU"/>
    <property type="match status" value="1"/>
</dbReference>
<dbReference type="PANTHER" id="PTHR43584">
    <property type="entry name" value="NUCLEOTIDYL TRANSFERASE"/>
    <property type="match status" value="1"/>
</dbReference>
<dbReference type="Pfam" id="PF00132">
    <property type="entry name" value="Hexapep"/>
    <property type="match status" value="1"/>
</dbReference>
<dbReference type="Pfam" id="PF12804">
    <property type="entry name" value="NTP_transf_3"/>
    <property type="match status" value="1"/>
</dbReference>
<dbReference type="SUPFAM" id="SSF53448">
    <property type="entry name" value="Nucleotide-diphospho-sugar transferases"/>
    <property type="match status" value="1"/>
</dbReference>
<dbReference type="SUPFAM" id="SSF51161">
    <property type="entry name" value="Trimeric LpxA-like enzymes"/>
    <property type="match status" value="1"/>
</dbReference>
<dbReference type="PROSITE" id="PS00101">
    <property type="entry name" value="HEXAPEP_TRANSFERASES"/>
    <property type="match status" value="1"/>
</dbReference>
<feature type="chain" id="PRO_0000244290" description="Bifunctional protein GlmU">
    <location>
        <begin position="1"/>
        <end position="454"/>
    </location>
</feature>
<feature type="region of interest" description="Pyrophosphorylase" evidence="1">
    <location>
        <begin position="1"/>
        <end position="232"/>
    </location>
</feature>
<feature type="region of interest" description="Linker" evidence="1">
    <location>
        <begin position="233"/>
        <end position="253"/>
    </location>
</feature>
<feature type="region of interest" description="N-acetyltransferase" evidence="1">
    <location>
        <begin position="254"/>
        <end position="454"/>
    </location>
</feature>
<feature type="active site" description="Proton acceptor" evidence="1">
    <location>
        <position position="349"/>
    </location>
</feature>
<feature type="binding site" evidence="1">
    <location>
        <begin position="11"/>
        <end position="14"/>
    </location>
    <ligand>
        <name>UDP-N-acetyl-alpha-D-glucosamine</name>
        <dbReference type="ChEBI" id="CHEBI:57705"/>
    </ligand>
</feature>
<feature type="binding site" evidence="1">
    <location>
        <position position="25"/>
    </location>
    <ligand>
        <name>UDP-N-acetyl-alpha-D-glucosamine</name>
        <dbReference type="ChEBI" id="CHEBI:57705"/>
    </ligand>
</feature>
<feature type="binding site" evidence="1">
    <location>
        <position position="78"/>
    </location>
    <ligand>
        <name>UDP-N-acetyl-alpha-D-glucosamine</name>
        <dbReference type="ChEBI" id="CHEBI:57705"/>
    </ligand>
</feature>
<feature type="binding site" evidence="1">
    <location>
        <begin position="83"/>
        <end position="84"/>
    </location>
    <ligand>
        <name>UDP-N-acetyl-alpha-D-glucosamine</name>
        <dbReference type="ChEBI" id="CHEBI:57705"/>
    </ligand>
</feature>
<feature type="binding site" evidence="1">
    <location>
        <position position="108"/>
    </location>
    <ligand>
        <name>Mg(2+)</name>
        <dbReference type="ChEBI" id="CHEBI:18420"/>
    </ligand>
</feature>
<feature type="binding site" evidence="1">
    <location>
        <position position="144"/>
    </location>
    <ligand>
        <name>UDP-N-acetyl-alpha-D-glucosamine</name>
        <dbReference type="ChEBI" id="CHEBI:57705"/>
    </ligand>
</feature>
<feature type="binding site" evidence="1">
    <location>
        <position position="158"/>
    </location>
    <ligand>
        <name>UDP-N-acetyl-alpha-D-glucosamine</name>
        <dbReference type="ChEBI" id="CHEBI:57705"/>
    </ligand>
</feature>
<feature type="binding site" evidence="1">
    <location>
        <position position="173"/>
    </location>
    <ligand>
        <name>UDP-N-acetyl-alpha-D-glucosamine</name>
        <dbReference type="ChEBI" id="CHEBI:57705"/>
    </ligand>
</feature>
<feature type="binding site" evidence="1">
    <location>
        <position position="230"/>
    </location>
    <ligand>
        <name>Mg(2+)</name>
        <dbReference type="ChEBI" id="CHEBI:18420"/>
    </ligand>
</feature>
<feature type="binding site" evidence="1">
    <location>
        <position position="230"/>
    </location>
    <ligand>
        <name>UDP-N-acetyl-alpha-D-glucosamine</name>
        <dbReference type="ChEBI" id="CHEBI:57705"/>
    </ligand>
</feature>
<feature type="binding site" evidence="1">
    <location>
        <position position="319"/>
    </location>
    <ligand>
        <name>UDP-N-acetyl-alpha-D-glucosamine</name>
        <dbReference type="ChEBI" id="CHEBI:57705"/>
    </ligand>
</feature>
<feature type="binding site" evidence="1">
    <location>
        <position position="337"/>
    </location>
    <ligand>
        <name>UDP-N-acetyl-alpha-D-glucosamine</name>
        <dbReference type="ChEBI" id="CHEBI:57705"/>
    </ligand>
</feature>
<feature type="binding site" evidence="1">
    <location>
        <position position="352"/>
    </location>
    <ligand>
        <name>UDP-N-acetyl-alpha-D-glucosamine</name>
        <dbReference type="ChEBI" id="CHEBI:57705"/>
    </ligand>
</feature>
<feature type="binding site" evidence="1">
    <location>
        <position position="363"/>
    </location>
    <ligand>
        <name>UDP-N-acetyl-alpha-D-glucosamine</name>
        <dbReference type="ChEBI" id="CHEBI:57705"/>
    </ligand>
</feature>
<feature type="binding site" evidence="1">
    <location>
        <position position="366"/>
    </location>
    <ligand>
        <name>acetyl-CoA</name>
        <dbReference type="ChEBI" id="CHEBI:57288"/>
    </ligand>
</feature>
<feature type="binding site" evidence="1">
    <location>
        <begin position="372"/>
        <end position="373"/>
    </location>
    <ligand>
        <name>acetyl-CoA</name>
        <dbReference type="ChEBI" id="CHEBI:57288"/>
    </ligand>
</feature>
<feature type="binding site" evidence="1">
    <location>
        <position position="391"/>
    </location>
    <ligand>
        <name>acetyl-CoA</name>
        <dbReference type="ChEBI" id="CHEBI:57288"/>
    </ligand>
</feature>
<feature type="binding site" evidence="1">
    <location>
        <position position="409"/>
    </location>
    <ligand>
        <name>acetyl-CoA</name>
        <dbReference type="ChEBI" id="CHEBI:57288"/>
    </ligand>
</feature>
<feature type="binding site" evidence="1">
    <location>
        <position position="426"/>
    </location>
    <ligand>
        <name>acetyl-CoA</name>
        <dbReference type="ChEBI" id="CHEBI:57288"/>
    </ligand>
</feature>
<evidence type="ECO:0000255" key="1">
    <source>
        <dbReference type="HAMAP-Rule" id="MF_01631"/>
    </source>
</evidence>
<proteinExistence type="inferred from homology"/>
<accession>Q2YKK2</accession>
<comment type="function">
    <text evidence="1">Catalyzes the last two sequential reactions in the de novo biosynthetic pathway for UDP-N-acetylglucosamine (UDP-GlcNAc). The C-terminal domain catalyzes the transfer of acetyl group from acetyl coenzyme A to glucosamine-1-phosphate (GlcN-1-P) to produce N-acetylglucosamine-1-phosphate (GlcNAc-1-P), which is converted into UDP-GlcNAc by the transfer of uridine 5-monophosphate (from uridine 5-triphosphate), a reaction catalyzed by the N-terminal domain.</text>
</comment>
<comment type="catalytic activity">
    <reaction evidence="1">
        <text>alpha-D-glucosamine 1-phosphate + acetyl-CoA = N-acetyl-alpha-D-glucosamine 1-phosphate + CoA + H(+)</text>
        <dbReference type="Rhea" id="RHEA:13725"/>
        <dbReference type="ChEBI" id="CHEBI:15378"/>
        <dbReference type="ChEBI" id="CHEBI:57287"/>
        <dbReference type="ChEBI" id="CHEBI:57288"/>
        <dbReference type="ChEBI" id="CHEBI:57776"/>
        <dbReference type="ChEBI" id="CHEBI:58516"/>
        <dbReference type="EC" id="2.3.1.157"/>
    </reaction>
</comment>
<comment type="catalytic activity">
    <reaction evidence="1">
        <text>N-acetyl-alpha-D-glucosamine 1-phosphate + UTP + H(+) = UDP-N-acetyl-alpha-D-glucosamine + diphosphate</text>
        <dbReference type="Rhea" id="RHEA:13509"/>
        <dbReference type="ChEBI" id="CHEBI:15378"/>
        <dbReference type="ChEBI" id="CHEBI:33019"/>
        <dbReference type="ChEBI" id="CHEBI:46398"/>
        <dbReference type="ChEBI" id="CHEBI:57705"/>
        <dbReference type="ChEBI" id="CHEBI:57776"/>
        <dbReference type="EC" id="2.7.7.23"/>
    </reaction>
</comment>
<comment type="cofactor">
    <cofactor evidence="1">
        <name>Mg(2+)</name>
        <dbReference type="ChEBI" id="CHEBI:18420"/>
    </cofactor>
    <text evidence="1">Binds 1 Mg(2+) ion per subunit.</text>
</comment>
<comment type="pathway">
    <text evidence="1">Nucleotide-sugar biosynthesis; UDP-N-acetyl-alpha-D-glucosamine biosynthesis; N-acetyl-alpha-D-glucosamine 1-phosphate from alpha-D-glucosamine 6-phosphate (route II): step 2/2.</text>
</comment>
<comment type="pathway">
    <text evidence="1">Nucleotide-sugar biosynthesis; UDP-N-acetyl-alpha-D-glucosamine biosynthesis; UDP-N-acetyl-alpha-D-glucosamine from N-acetyl-alpha-D-glucosamine 1-phosphate: step 1/1.</text>
</comment>
<comment type="pathway">
    <text evidence="1">Bacterial outer membrane biogenesis; LPS lipid A biosynthesis.</text>
</comment>
<comment type="subunit">
    <text evidence="1">Homotrimer.</text>
</comment>
<comment type="subcellular location">
    <subcellularLocation>
        <location evidence="1">Cytoplasm</location>
    </subcellularLocation>
</comment>
<comment type="similarity">
    <text evidence="1">In the N-terminal section; belongs to the N-acetylglucosamine-1-phosphate uridyltransferase family.</text>
</comment>
<comment type="similarity">
    <text evidence="1">In the C-terminal section; belongs to the transferase hexapeptide repeat family.</text>
</comment>